<reference key="1">
    <citation type="journal article" date="2009" name="Proc. Natl. Acad. Sci. U.S.A.">
        <title>The genomic basis of trophic strategy in marine bacteria.</title>
        <authorList>
            <person name="Lauro F.M."/>
            <person name="McDougald D."/>
            <person name="Thomas T."/>
            <person name="Williams T.J."/>
            <person name="Egan S."/>
            <person name="Rice S."/>
            <person name="DeMaere M.Z."/>
            <person name="Ting L."/>
            <person name="Ertan H."/>
            <person name="Johnson J."/>
            <person name="Ferriera S."/>
            <person name="Lapidus A."/>
            <person name="Anderson I."/>
            <person name="Kyrpides N."/>
            <person name="Munk A.C."/>
            <person name="Detter C."/>
            <person name="Han C.S."/>
            <person name="Brown M.V."/>
            <person name="Robb F.T."/>
            <person name="Kjelleberg S."/>
            <person name="Cavicchioli R."/>
        </authorList>
    </citation>
    <scope>NUCLEOTIDE SEQUENCE [LARGE SCALE GENOMIC DNA]</scope>
    <source>
        <strain>DSM 13593 / LMG 18877 / RB2256</strain>
    </source>
</reference>
<sequence>MTRAAAEARGRRAERRAAWWLRLHGWRIVGQRLRVPVGEVDLVARRGRTVAFIEVKWRDRAADLDLAIDPYRLRRVAAAAEMLAPRFARPYDDIRIDVMLLAPRRLPRHLVHVWQP</sequence>
<evidence type="ECO:0000255" key="1">
    <source>
        <dbReference type="HAMAP-Rule" id="MF_00048"/>
    </source>
</evidence>
<protein>
    <recommendedName>
        <fullName evidence="1">UPF0102 protein Sala_0262</fullName>
    </recommendedName>
</protein>
<gene>
    <name type="ordered locus">Sala_0262</name>
</gene>
<keyword id="KW-1185">Reference proteome</keyword>
<feature type="chain" id="PRO_0000336267" description="UPF0102 protein Sala_0262">
    <location>
        <begin position="1"/>
        <end position="116"/>
    </location>
</feature>
<comment type="similarity">
    <text evidence="1">Belongs to the UPF0102 family.</text>
</comment>
<organism>
    <name type="scientific">Sphingopyxis alaskensis (strain DSM 13593 / LMG 18877 / RB2256)</name>
    <name type="common">Sphingomonas alaskensis</name>
    <dbReference type="NCBI Taxonomy" id="317655"/>
    <lineage>
        <taxon>Bacteria</taxon>
        <taxon>Pseudomonadati</taxon>
        <taxon>Pseudomonadota</taxon>
        <taxon>Alphaproteobacteria</taxon>
        <taxon>Sphingomonadales</taxon>
        <taxon>Sphingomonadaceae</taxon>
        <taxon>Sphingopyxis</taxon>
    </lineage>
</organism>
<name>Y262_SPHAL</name>
<proteinExistence type="inferred from homology"/>
<accession>Q1GWI7</accession>
<dbReference type="EMBL" id="CP000356">
    <property type="protein sequence ID" value="ABF51985.1"/>
    <property type="molecule type" value="Genomic_DNA"/>
</dbReference>
<dbReference type="RefSeq" id="WP_011540577.1">
    <property type="nucleotide sequence ID" value="NC_008048.1"/>
</dbReference>
<dbReference type="SMR" id="Q1GWI7"/>
<dbReference type="STRING" id="317655.Sala_0262"/>
<dbReference type="KEGG" id="sal:Sala_0262"/>
<dbReference type="eggNOG" id="COG0792">
    <property type="taxonomic scope" value="Bacteria"/>
</dbReference>
<dbReference type="HOGENOM" id="CLU_115353_0_2_5"/>
<dbReference type="OrthoDB" id="9812968at2"/>
<dbReference type="Proteomes" id="UP000006578">
    <property type="component" value="Chromosome"/>
</dbReference>
<dbReference type="GO" id="GO:0003676">
    <property type="term" value="F:nucleic acid binding"/>
    <property type="evidence" value="ECO:0007669"/>
    <property type="project" value="InterPro"/>
</dbReference>
<dbReference type="Gene3D" id="3.40.1350.10">
    <property type="match status" value="1"/>
</dbReference>
<dbReference type="HAMAP" id="MF_00048">
    <property type="entry name" value="UPF0102"/>
    <property type="match status" value="1"/>
</dbReference>
<dbReference type="InterPro" id="IPR011335">
    <property type="entry name" value="Restrct_endonuc-II-like"/>
</dbReference>
<dbReference type="InterPro" id="IPR011856">
    <property type="entry name" value="tRNA_endonuc-like_dom_sf"/>
</dbReference>
<dbReference type="InterPro" id="IPR003509">
    <property type="entry name" value="UPF0102_YraN-like"/>
</dbReference>
<dbReference type="PANTHER" id="PTHR34039">
    <property type="entry name" value="UPF0102 PROTEIN YRAN"/>
    <property type="match status" value="1"/>
</dbReference>
<dbReference type="PANTHER" id="PTHR34039:SF1">
    <property type="entry name" value="UPF0102 PROTEIN YRAN"/>
    <property type="match status" value="1"/>
</dbReference>
<dbReference type="Pfam" id="PF02021">
    <property type="entry name" value="UPF0102"/>
    <property type="match status" value="1"/>
</dbReference>
<dbReference type="SUPFAM" id="SSF52980">
    <property type="entry name" value="Restriction endonuclease-like"/>
    <property type="match status" value="1"/>
</dbReference>